<organism>
    <name type="scientific">Borago officinalis</name>
    <name type="common">Bourrache</name>
    <name type="synonym">Borage</name>
    <dbReference type="NCBI Taxonomy" id="13363"/>
    <lineage>
        <taxon>Eukaryota</taxon>
        <taxon>Viridiplantae</taxon>
        <taxon>Streptophyta</taxon>
        <taxon>Embryophyta</taxon>
        <taxon>Tracheophyta</taxon>
        <taxon>Spermatophyta</taxon>
        <taxon>Magnoliopsida</taxon>
        <taxon>eudicotyledons</taxon>
        <taxon>Gunneridae</taxon>
        <taxon>Pentapetalae</taxon>
        <taxon>asterids</taxon>
        <taxon>lamiids</taxon>
        <taxon>Boraginales</taxon>
        <taxon>Boraginaceae</taxon>
        <taxon>Boraginoideae</taxon>
        <taxon>Boragineae</taxon>
        <taxon>Boragininae</taxon>
        <taxon>Borago</taxon>
    </lineage>
</organism>
<dbReference type="EC" id="1.14.19.29" evidence="5"/>
<dbReference type="EMBL" id="AF133728">
    <property type="protein sequence ID" value="AAG43277.1"/>
    <property type="molecule type" value="mRNA"/>
</dbReference>
<dbReference type="SMR" id="Q9FR82"/>
<dbReference type="BRENDA" id="1.14.19.29">
    <property type="organism ID" value="895"/>
</dbReference>
<dbReference type="BRENDA" id="1.14.19.4">
    <property type="organism ID" value="895"/>
</dbReference>
<dbReference type="GO" id="GO:0016020">
    <property type="term" value="C:membrane"/>
    <property type="evidence" value="ECO:0007669"/>
    <property type="project" value="UniProtKB-SubCell"/>
</dbReference>
<dbReference type="GO" id="GO:0046872">
    <property type="term" value="F:metal ion binding"/>
    <property type="evidence" value="ECO:0007669"/>
    <property type="project" value="UniProtKB-KW"/>
</dbReference>
<dbReference type="GO" id="GO:0052631">
    <property type="term" value="F:sphingolipid 8-(E/Z)-desaturase activity"/>
    <property type="evidence" value="ECO:0007669"/>
    <property type="project" value="UniProtKB-EC"/>
</dbReference>
<dbReference type="GO" id="GO:0006665">
    <property type="term" value="P:sphingolipid metabolic process"/>
    <property type="evidence" value="ECO:0007669"/>
    <property type="project" value="UniProtKB-KW"/>
</dbReference>
<dbReference type="CDD" id="cd03506">
    <property type="entry name" value="Delta6-FADS-like"/>
    <property type="match status" value="1"/>
</dbReference>
<dbReference type="Gene3D" id="3.10.120.10">
    <property type="entry name" value="Cytochrome b5-like heme/steroid binding domain"/>
    <property type="match status" value="1"/>
</dbReference>
<dbReference type="InterPro" id="IPR001199">
    <property type="entry name" value="Cyt_B5-like_heme/steroid-bd"/>
</dbReference>
<dbReference type="InterPro" id="IPR036400">
    <property type="entry name" value="Cyt_B5-like_heme/steroid_sf"/>
</dbReference>
<dbReference type="InterPro" id="IPR005804">
    <property type="entry name" value="FA_desaturase_dom"/>
</dbReference>
<dbReference type="InterPro" id="IPR012171">
    <property type="entry name" value="Fatty_acid_desaturase"/>
</dbReference>
<dbReference type="PANTHER" id="PTHR19353:SF28">
    <property type="entry name" value="DELTA(8)-FATTY-ACID DESATURASE 2"/>
    <property type="match status" value="1"/>
</dbReference>
<dbReference type="PANTHER" id="PTHR19353">
    <property type="entry name" value="FATTY ACID DESATURASE 2"/>
    <property type="match status" value="1"/>
</dbReference>
<dbReference type="Pfam" id="PF00173">
    <property type="entry name" value="Cyt-b5"/>
    <property type="match status" value="1"/>
</dbReference>
<dbReference type="Pfam" id="PF00487">
    <property type="entry name" value="FA_desaturase"/>
    <property type="match status" value="1"/>
</dbReference>
<dbReference type="PIRSF" id="PIRSF015921">
    <property type="entry name" value="FA_sphinglp_des"/>
    <property type="match status" value="1"/>
</dbReference>
<dbReference type="SMART" id="SM01117">
    <property type="entry name" value="Cyt-b5"/>
    <property type="match status" value="1"/>
</dbReference>
<dbReference type="SUPFAM" id="SSF55856">
    <property type="entry name" value="Cytochrome b5-like heme/steroid binding domain"/>
    <property type="match status" value="1"/>
</dbReference>
<dbReference type="PROSITE" id="PS50255">
    <property type="entry name" value="CYTOCHROME_B5_2"/>
    <property type="match status" value="1"/>
</dbReference>
<name>SLD1_BOROF</name>
<feature type="chain" id="PRO_0000418892" description="Delta(8)-fatty-acid desaturase">
    <location>
        <begin position="1"/>
        <end position="446"/>
    </location>
</feature>
<feature type="transmembrane region" description="Helical" evidence="2">
    <location>
        <begin position="112"/>
        <end position="132"/>
    </location>
</feature>
<feature type="transmembrane region" description="Helical" evidence="2">
    <location>
        <begin position="136"/>
        <end position="156"/>
    </location>
</feature>
<feature type="transmembrane region" description="Helical" evidence="2">
    <location>
        <begin position="174"/>
        <end position="195"/>
    </location>
</feature>
<feature type="transmembrane region" description="Helical" evidence="2">
    <location>
        <begin position="253"/>
        <end position="273"/>
    </location>
</feature>
<feature type="transmembrane region" description="Helical" evidence="2">
    <location>
        <begin position="282"/>
        <end position="302"/>
    </location>
</feature>
<feature type="transmembrane region" description="Helical" evidence="2">
    <location>
        <begin position="309"/>
        <end position="329"/>
    </location>
</feature>
<feature type="domain" description="Cytochrome b5 heme-binding" evidence="3">
    <location>
        <begin position="5"/>
        <end position="89"/>
    </location>
</feature>
<feature type="short sequence motif" description="Histidine box-1" evidence="6">
    <location>
        <begin position="158"/>
        <end position="162"/>
    </location>
</feature>
<feature type="short sequence motif" description="Histidine box-2" evidence="6">
    <location>
        <begin position="195"/>
        <end position="199"/>
    </location>
</feature>
<feature type="short sequence motif" description="Histidine box-3" evidence="6">
    <location>
        <begin position="372"/>
        <end position="376"/>
    </location>
</feature>
<feature type="binding site" description="axial binding residue" evidence="3">
    <location>
        <position position="40"/>
    </location>
    <ligand>
        <name>heme</name>
        <dbReference type="ChEBI" id="CHEBI:30413"/>
    </ligand>
    <ligandPart>
        <name>Fe</name>
        <dbReference type="ChEBI" id="CHEBI:18248"/>
    </ligandPart>
</feature>
<feature type="binding site" description="axial binding residue" evidence="3">
    <location>
        <position position="63"/>
    </location>
    <ligand>
        <name>heme</name>
        <dbReference type="ChEBI" id="CHEBI:30413"/>
    </ligand>
    <ligandPart>
        <name>Fe</name>
        <dbReference type="ChEBI" id="CHEBI:18248"/>
    </ligandPart>
</feature>
<comment type="function">
    <text evidence="4 5">Plays a major role as delta(8)-fatty-acid desaturase which introduces a double bond at the 8-position in the long-chain base (LCB) of ceramides with or without a hydroxy group at the 4-position. The enzyme produces both the 8E and 8Z isomers (in a 4:1 ratio). This structural modification contributes to the quantitative partitioning of ceramides between the two major sphingolipid classes, glucosylceramides and glycosylinositolphosphoryl ceramides. Sphingolipids are important membrane components involved in environmental stress responses, such as resistance to chilling, and act as cell signaling molecules.</text>
</comment>
<comment type="catalytic activity">
    <reaction evidence="5">
        <text>an N-acyl-(4R)-4-hydroxysphinganine + 2 Fe(II)-[cytochrome b5] + O2 + 2 H(+) = a (4R,8E)-4-hydroxysphingenine ceramide + 2 Fe(III)-[cytochrome b5] + 2 H2O</text>
        <dbReference type="Rhea" id="RHEA:46268"/>
        <dbReference type="Rhea" id="RHEA-COMP:10438"/>
        <dbReference type="Rhea" id="RHEA-COMP:10439"/>
        <dbReference type="ChEBI" id="CHEBI:15377"/>
        <dbReference type="ChEBI" id="CHEBI:15378"/>
        <dbReference type="ChEBI" id="CHEBI:15379"/>
        <dbReference type="ChEBI" id="CHEBI:29033"/>
        <dbReference type="ChEBI" id="CHEBI:29034"/>
        <dbReference type="ChEBI" id="CHEBI:31998"/>
        <dbReference type="ChEBI" id="CHEBI:50934"/>
        <dbReference type="EC" id="1.14.19.29"/>
    </reaction>
</comment>
<comment type="catalytic activity">
    <reaction evidence="5">
        <text>an N-acyl-(4R)-4-hydroxysphinganine + 2 Fe(II)-[cytochrome b5] + O2 + 2 H(+) = a (4R,8Z)-4-hydroxysphing-8-enine ceramide + 2 Fe(III)-[cytochrome b5] + 2 H2O</text>
        <dbReference type="Rhea" id="RHEA:46272"/>
        <dbReference type="Rhea" id="RHEA-COMP:10438"/>
        <dbReference type="Rhea" id="RHEA-COMP:10439"/>
        <dbReference type="ChEBI" id="CHEBI:15377"/>
        <dbReference type="ChEBI" id="CHEBI:15378"/>
        <dbReference type="ChEBI" id="CHEBI:15379"/>
        <dbReference type="ChEBI" id="CHEBI:29033"/>
        <dbReference type="ChEBI" id="CHEBI:29034"/>
        <dbReference type="ChEBI" id="CHEBI:31998"/>
        <dbReference type="ChEBI" id="CHEBI:85951"/>
        <dbReference type="EC" id="1.14.19.29"/>
    </reaction>
</comment>
<comment type="cofactor">
    <cofactor evidence="1">
        <name>Fe cation</name>
        <dbReference type="ChEBI" id="CHEBI:24875"/>
    </cofactor>
</comment>
<comment type="subcellular location">
    <subcellularLocation>
        <location evidence="6">Membrane</location>
        <topology evidence="6">Multi-pass membrane protein</topology>
    </subcellularLocation>
</comment>
<comment type="tissue specificity">
    <text evidence="5">Expressed only in young leaves.</text>
</comment>
<comment type="domain">
    <text evidence="1">The histidine box domains may contain the active site and/or be involved in metal ion binding.</text>
</comment>
<comment type="similarity">
    <text evidence="6">Belongs to the fatty acid desaturase type 1 family.</text>
</comment>
<keyword id="KW-0249">Electron transport</keyword>
<keyword id="KW-0349">Heme</keyword>
<keyword id="KW-0408">Iron</keyword>
<keyword id="KW-0443">Lipid metabolism</keyword>
<keyword id="KW-0472">Membrane</keyword>
<keyword id="KW-0479">Metal-binding</keyword>
<keyword id="KW-0560">Oxidoreductase</keyword>
<keyword id="KW-0746">Sphingolipid metabolism</keyword>
<keyword id="KW-0812">Transmembrane</keyword>
<keyword id="KW-1133">Transmembrane helix</keyword>
<keyword id="KW-0813">Transport</keyword>
<sequence>MEGTKKYISVGELEKHNQLGDVWISIQGKVYNVTDWIKKHPGGDVPIMNLAGQDATDAFIAYHPGTAWKNLENLFTGYHLEDYLVSEISKDYRKLASEFSKAGLFEKKGHTVIYCLSFIALLLCGCVYGVLCSNSLWVHMLSGAMLGMCFIQAAYLGHDSGHYTMMSSKGYNKFAQVLNGNCLTGISIAWWKWTHNAHHIACNSLDYDPDLQHLPVFAVPSSFFKSLTSRFYGRELTFDGLSRFLVSYQHFTIYLVMIFGRINLYVQTFLLLFSTRKVPDRALNIIGILVYWTWFPYLVSCLPNWNERVLFVLTCFSVTALQHIQFTLNHFAADVYVGPPTGTNWFEKQAAGTIDISCSSWMDWFFGGLQFQLEHHLFPRMPRCQLRNISPIVQDYCKKHNLPYRSLSFFDANVATIKTLRTAALQARDLTVVPQNLLWEAFNTHG</sequence>
<gene>
    <name type="primary">sld1</name>
</gene>
<protein>
    <recommendedName>
        <fullName>Delta(8)-fatty-acid desaturase</fullName>
        <ecNumber evidence="5">1.14.19.29</ecNumber>
    </recommendedName>
    <alternativeName>
        <fullName>Delta(8)-sphingolipid desaturase</fullName>
    </alternativeName>
    <alternativeName>
        <fullName>Sphingolipid 8-(E/Z)-desaturase</fullName>
    </alternativeName>
</protein>
<reference key="1">
    <citation type="journal article" date="2001" name="Arch. Biochem. Biophys.">
        <title>Functional identification of a delta8-sphingolipid desaturase from Borago officinalis.</title>
        <authorList>
            <person name="Sperling P."/>
            <person name="Libisch B."/>
            <person name="Zahringer U."/>
            <person name="Napier J.A."/>
            <person name="Heinz E."/>
        </authorList>
    </citation>
    <scope>NUCLEOTIDE SEQUENCE [MRNA]</scope>
    <scope>CATALYTIC ACTIVITY</scope>
    <scope>FUNCTION</scope>
    <scope>TISSUE SPECIFICITY</scope>
</reference>
<reference key="2">
    <citation type="journal article" date="2000" name="Biochem. Biophys. Res. Commun.">
        <title>Chimeras of Delta6-fatty acid and Delta8-sphingolipid desaturases.</title>
        <authorList>
            <person name="Libisch B."/>
            <person name="Michaelson L.V."/>
            <person name="Lewis M.J."/>
            <person name="Shewry P.R."/>
            <person name="Napier J.A."/>
        </authorList>
    </citation>
    <scope>FUNCTION</scope>
</reference>
<evidence type="ECO:0000250" key="1"/>
<evidence type="ECO:0000255" key="2"/>
<evidence type="ECO:0000255" key="3">
    <source>
        <dbReference type="PROSITE-ProRule" id="PRU00279"/>
    </source>
</evidence>
<evidence type="ECO:0000269" key="4">
    <source>
    </source>
</evidence>
<evidence type="ECO:0000269" key="5">
    <source>
    </source>
</evidence>
<evidence type="ECO:0000305" key="6"/>
<proteinExistence type="evidence at protein level"/>
<accession>Q9FR82</accession>